<proteinExistence type="inferred from homology"/>
<dbReference type="EMBL" id="FO080188">
    <property type="protein sequence ID" value="CCD61841.3"/>
    <property type="molecule type" value="Genomic_DNA"/>
</dbReference>
<dbReference type="PIR" id="T15350">
    <property type="entry name" value="T15350"/>
</dbReference>
<dbReference type="RefSeq" id="NP_509188.3">
    <property type="nucleotide sequence ID" value="NM_076787.6"/>
</dbReference>
<dbReference type="SMR" id="Q11076"/>
<dbReference type="FunCoup" id="Q11076">
    <property type="interactions" value="156"/>
</dbReference>
<dbReference type="STRING" id="6239.B0403.2.2"/>
<dbReference type="iPTMnet" id="Q11076"/>
<dbReference type="PaxDb" id="6239-B0403.2"/>
<dbReference type="EnsemblMetazoa" id="B0403.2.1">
    <property type="protein sequence ID" value="B0403.2.1"/>
    <property type="gene ID" value="WBGene00006712"/>
</dbReference>
<dbReference type="GeneID" id="181979"/>
<dbReference type="KEGG" id="cel:CELE_B0403.2"/>
<dbReference type="UCSC" id="B0403.2">
    <property type="organism name" value="c. elegans"/>
</dbReference>
<dbReference type="AGR" id="WB:WBGene00006712"/>
<dbReference type="CTD" id="181979"/>
<dbReference type="WormBase" id="B0403.2">
    <property type="protein sequence ID" value="CE47666"/>
    <property type="gene ID" value="WBGene00006712"/>
    <property type="gene designation" value="ubc-17"/>
</dbReference>
<dbReference type="eggNOG" id="KOG0895">
    <property type="taxonomic scope" value="Eukaryota"/>
</dbReference>
<dbReference type="GeneTree" id="ENSGT00940000156126"/>
<dbReference type="HOGENOM" id="CLU_422917_0_0_1"/>
<dbReference type="InParanoid" id="Q11076"/>
<dbReference type="OMA" id="RSRWDIE"/>
<dbReference type="OrthoDB" id="47801at2759"/>
<dbReference type="PhylomeDB" id="Q11076"/>
<dbReference type="PRO" id="PR:Q11076"/>
<dbReference type="Proteomes" id="UP000001940">
    <property type="component" value="Chromosome X"/>
</dbReference>
<dbReference type="Bgee" id="WBGene00006712">
    <property type="expression patterns" value="Expressed in pharyngeal muscle cell (C elegans) and 3 other cell types or tissues"/>
</dbReference>
<dbReference type="GO" id="GO:0005634">
    <property type="term" value="C:nucleus"/>
    <property type="evidence" value="ECO:0000318"/>
    <property type="project" value="GO_Central"/>
</dbReference>
<dbReference type="GO" id="GO:0005802">
    <property type="term" value="C:trans-Golgi network"/>
    <property type="evidence" value="ECO:0000318"/>
    <property type="project" value="GO_Central"/>
</dbReference>
<dbReference type="GO" id="GO:0016874">
    <property type="term" value="F:ligase activity"/>
    <property type="evidence" value="ECO:0007669"/>
    <property type="project" value="UniProtKB-KW"/>
</dbReference>
<dbReference type="GO" id="GO:0061631">
    <property type="term" value="F:ubiquitin conjugating enzyme activity"/>
    <property type="evidence" value="ECO:0000318"/>
    <property type="project" value="GO_Central"/>
</dbReference>
<dbReference type="GO" id="GO:0043066">
    <property type="term" value="P:negative regulation of apoptotic process"/>
    <property type="evidence" value="ECO:0000318"/>
    <property type="project" value="GO_Central"/>
</dbReference>
<dbReference type="CDD" id="cd23810">
    <property type="entry name" value="UBCc_BIRC6"/>
    <property type="match status" value="1"/>
</dbReference>
<dbReference type="FunFam" id="3.10.110.10:FF:000014">
    <property type="entry name" value="Baculoviral IAP repeat-containing protein 6"/>
    <property type="match status" value="1"/>
</dbReference>
<dbReference type="Gene3D" id="3.10.110.10">
    <property type="entry name" value="Ubiquitin Conjugating Enzyme"/>
    <property type="match status" value="1"/>
</dbReference>
<dbReference type="InterPro" id="IPR000608">
    <property type="entry name" value="UBQ-conjugat_E2_core"/>
</dbReference>
<dbReference type="InterPro" id="IPR016135">
    <property type="entry name" value="UBQ-conjugating_enzyme/RWD"/>
</dbReference>
<dbReference type="PANTHER" id="PTHR46116">
    <property type="entry name" value="(E3-INDEPENDENT) E2 UBIQUITIN-CONJUGATING ENZYME"/>
    <property type="match status" value="1"/>
</dbReference>
<dbReference type="PANTHER" id="PTHR46116:SF39">
    <property type="entry name" value="BACULOVIRAL IAP REPEAT-CONTAINING PROTEIN 6"/>
    <property type="match status" value="1"/>
</dbReference>
<dbReference type="Pfam" id="PF00179">
    <property type="entry name" value="UQ_con"/>
    <property type="match status" value="1"/>
</dbReference>
<dbReference type="SMART" id="SM00212">
    <property type="entry name" value="UBCc"/>
    <property type="match status" value="1"/>
</dbReference>
<dbReference type="SUPFAM" id="SSF54495">
    <property type="entry name" value="UBC-like"/>
    <property type="match status" value="1"/>
</dbReference>
<dbReference type="PROSITE" id="PS50127">
    <property type="entry name" value="UBC_2"/>
    <property type="match status" value="1"/>
</dbReference>
<organism>
    <name type="scientific">Caenorhabditis elegans</name>
    <dbReference type="NCBI Taxonomy" id="6239"/>
    <lineage>
        <taxon>Eukaryota</taxon>
        <taxon>Metazoa</taxon>
        <taxon>Ecdysozoa</taxon>
        <taxon>Nematoda</taxon>
        <taxon>Chromadorea</taxon>
        <taxon>Rhabditida</taxon>
        <taxon>Rhabditina</taxon>
        <taxon>Rhabditomorpha</taxon>
        <taxon>Rhabditoidea</taxon>
        <taxon>Rhabditidae</taxon>
        <taxon>Peloderinae</taxon>
        <taxon>Caenorhabditis</taxon>
    </lineage>
</organism>
<keyword id="KW-0436">Ligase</keyword>
<keyword id="KW-1185">Reference proteome</keyword>
<keyword id="KW-0808">Transferase</keyword>
<keyword id="KW-0833">Ubl conjugation pathway</keyword>
<feature type="chain" id="PRO_0000082617" description="Probable ubiquitin-conjugating enzyme protein 17">
    <location>
        <begin position="1"/>
        <end position="728"/>
    </location>
</feature>
<feature type="domain" description="UBC core" evidence="1">
    <location>
        <begin position="402"/>
        <end position="568"/>
    </location>
</feature>
<feature type="region of interest" description="Disordered" evidence="2">
    <location>
        <begin position="1"/>
        <end position="23"/>
    </location>
</feature>
<feature type="region of interest" description="Disordered" evidence="2">
    <location>
        <begin position="123"/>
        <end position="155"/>
    </location>
</feature>
<feature type="region of interest" description="Disordered" evidence="2">
    <location>
        <begin position="649"/>
        <end position="678"/>
    </location>
</feature>
<feature type="region of interest" description="Disordered" evidence="2">
    <location>
        <begin position="709"/>
        <end position="728"/>
    </location>
</feature>
<feature type="compositionally biased region" description="Low complexity" evidence="2">
    <location>
        <begin position="1"/>
        <end position="17"/>
    </location>
</feature>
<feature type="compositionally biased region" description="Basic and acidic residues" evidence="2">
    <location>
        <begin position="658"/>
        <end position="678"/>
    </location>
</feature>
<feature type="compositionally biased region" description="Polar residues" evidence="2">
    <location>
        <begin position="710"/>
        <end position="728"/>
    </location>
</feature>
<feature type="active site" description="Glycyl thioester intermediate" evidence="1">
    <location>
        <position position="495"/>
    </location>
</feature>
<protein>
    <recommendedName>
        <fullName>Probable ubiquitin-conjugating enzyme protein 17</fullName>
    </recommendedName>
</protein>
<sequence length="728" mass="83100">MSSQASQRSSSTSAVAQKTRERRKSKSRRRCWFGCLWLSSRVSLIRSSSRFSRSPEPDESLTAIDKVMSIINEKPLKMAHILKTARFVNDVSFSERKQFVECGVIHHLLELIGETAISDFSASSRSADEQKRRARRNSSASLSHKGTGYGTGSTRSRWDIERTVEEKLIREEHLTWLLSILNSFMLGWPTTDNLKTKPEELVHMTEIAIKLIADSSVLSILEYNLRNDSFFDVSEHIEIYQALLETAASMAATPGLVPFLVRPYTSSAKSIAKELIPRFKENILSIQARWGGTLEETNFRMAEFTAKVTLLSDYVINAARAYEQTLPPEQRIQTATHRRPSHSGLHSKMQGPKDDETIYKNKMQELQLQTAKFIGDFGKLCVPYVFRKEAKNINPFSPHLRDRTKRIAKELASIANALPLNASNSIYVCYDEGRVDIIKVLISGPDDTPYANGLFEFDIFFPTGYPFSPPKCAFLTTGSGNVRFNPNLYNDGKICLSILGTWEGRPEEKWNPYCSLMQVLVSIQGLIFVKDPYFNEPGFERYQGTDRGDEYSRKYNLQIEHATLNYAIREQLKKPSEHFKEVIEKHLWLKREAILKQAQAWIDNVSNDFGDDKMSKRKDVFAFETGFNPATQERVIHNLIQELQAMQSPFAKEEAEESERLKREQSEKEEKQKKEAAALAEIEREKRELELDFQRRRSSVLATHVAVIRTQPTGDYSVPSVNEPSTSS</sequence>
<accession>Q11076</accession>
<name>UBC17_CAEEL</name>
<comment type="similarity">
    <text evidence="1">Belongs to the ubiquitin-conjugating enzyme family.</text>
</comment>
<evidence type="ECO:0000255" key="1">
    <source>
        <dbReference type="PROSITE-ProRule" id="PRU00388"/>
    </source>
</evidence>
<evidence type="ECO:0000256" key="2">
    <source>
        <dbReference type="SAM" id="MobiDB-lite"/>
    </source>
</evidence>
<reference key="1">
    <citation type="journal article" date="1998" name="Science">
        <title>Genome sequence of the nematode C. elegans: a platform for investigating biology.</title>
        <authorList>
            <consortium name="The C. elegans sequencing consortium"/>
        </authorList>
    </citation>
    <scope>NUCLEOTIDE SEQUENCE [LARGE SCALE GENOMIC DNA]</scope>
    <source>
        <strain>Bristol N2</strain>
    </source>
</reference>
<reference key="2">
    <citation type="journal article" date="2002" name="Genome Biol.">
        <title>Functional and phylogenetic analysis of the ubiquitylation system in Caenorhabditis elegans: ubiquitin-conjugating enzymes, ubiquitin-activating enzymes, and ubiquitin-like proteins.</title>
        <authorList>
            <person name="Jones D."/>
            <person name="Crowe E."/>
            <person name="Stevens T.A."/>
            <person name="Candido E.P.M."/>
        </authorList>
    </citation>
    <scope>IDENTIFICATION</scope>
</reference>
<gene>
    <name type="primary">ubc-17</name>
    <name type="ORF">B0403.2</name>
</gene>